<comment type="function">
    <text evidence="1">Succinyl-CoA synthetase functions in the citric acid cycle (TCA), coupling the hydrolysis of succinyl-CoA to the synthesis of either ATP or GTP and thus represents the only step of substrate-level phosphorylation in the TCA. The beta subunit provides nucleotide specificity of the enzyme and binds the substrate succinate, while the binding sites for coenzyme A and phosphate are found in the alpha subunit.</text>
</comment>
<comment type="catalytic activity">
    <reaction evidence="1">
        <text>succinate + ATP + CoA = succinyl-CoA + ADP + phosphate</text>
        <dbReference type="Rhea" id="RHEA:17661"/>
        <dbReference type="ChEBI" id="CHEBI:30031"/>
        <dbReference type="ChEBI" id="CHEBI:30616"/>
        <dbReference type="ChEBI" id="CHEBI:43474"/>
        <dbReference type="ChEBI" id="CHEBI:57287"/>
        <dbReference type="ChEBI" id="CHEBI:57292"/>
        <dbReference type="ChEBI" id="CHEBI:456216"/>
        <dbReference type="EC" id="6.2.1.5"/>
    </reaction>
    <physiologicalReaction direction="right-to-left" evidence="1">
        <dbReference type="Rhea" id="RHEA:17663"/>
    </physiologicalReaction>
</comment>
<comment type="catalytic activity">
    <reaction evidence="1">
        <text>GTP + succinate + CoA = succinyl-CoA + GDP + phosphate</text>
        <dbReference type="Rhea" id="RHEA:22120"/>
        <dbReference type="ChEBI" id="CHEBI:30031"/>
        <dbReference type="ChEBI" id="CHEBI:37565"/>
        <dbReference type="ChEBI" id="CHEBI:43474"/>
        <dbReference type="ChEBI" id="CHEBI:57287"/>
        <dbReference type="ChEBI" id="CHEBI:57292"/>
        <dbReference type="ChEBI" id="CHEBI:58189"/>
    </reaction>
    <physiologicalReaction direction="right-to-left" evidence="1">
        <dbReference type="Rhea" id="RHEA:22122"/>
    </physiologicalReaction>
</comment>
<comment type="cofactor">
    <cofactor evidence="1">
        <name>Mg(2+)</name>
        <dbReference type="ChEBI" id="CHEBI:18420"/>
    </cofactor>
    <text evidence="1">Binds 1 Mg(2+) ion per subunit.</text>
</comment>
<comment type="pathway">
    <text evidence="1">Carbohydrate metabolism; tricarboxylic acid cycle; succinate from succinyl-CoA (ligase route): step 1/1.</text>
</comment>
<comment type="subunit">
    <text evidence="1">Heterotetramer of two alpha and two beta subunits.</text>
</comment>
<comment type="similarity">
    <text evidence="1">Belongs to the succinate/malate CoA ligase beta subunit family.</text>
</comment>
<name>SUCC_MYXXD</name>
<protein>
    <recommendedName>
        <fullName evidence="1">Succinate--CoA ligase [ADP-forming] subunit beta</fullName>
        <ecNumber evidence="1">6.2.1.5</ecNumber>
    </recommendedName>
    <alternativeName>
        <fullName evidence="1">Succinyl-CoA synthetase subunit beta</fullName>
        <shortName evidence="1">SCS-beta</shortName>
    </alternativeName>
</protein>
<organism>
    <name type="scientific">Myxococcus xanthus (strain DK1622)</name>
    <dbReference type="NCBI Taxonomy" id="246197"/>
    <lineage>
        <taxon>Bacteria</taxon>
        <taxon>Pseudomonadati</taxon>
        <taxon>Myxococcota</taxon>
        <taxon>Myxococcia</taxon>
        <taxon>Myxococcales</taxon>
        <taxon>Cystobacterineae</taxon>
        <taxon>Myxococcaceae</taxon>
        <taxon>Myxococcus</taxon>
    </lineage>
</organism>
<reference key="1">
    <citation type="journal article" date="2006" name="Proc. Natl. Acad. Sci. U.S.A.">
        <title>Evolution of sensory complexity recorded in a myxobacterial genome.</title>
        <authorList>
            <person name="Goldman B.S."/>
            <person name="Nierman W.C."/>
            <person name="Kaiser D."/>
            <person name="Slater S.C."/>
            <person name="Durkin A.S."/>
            <person name="Eisen J.A."/>
            <person name="Ronning C.M."/>
            <person name="Barbazuk W.B."/>
            <person name="Blanchard M."/>
            <person name="Field C."/>
            <person name="Halling C."/>
            <person name="Hinkle G."/>
            <person name="Iartchuk O."/>
            <person name="Kim H.S."/>
            <person name="Mackenzie C."/>
            <person name="Madupu R."/>
            <person name="Miller N."/>
            <person name="Shvartsbeyn A."/>
            <person name="Sullivan S.A."/>
            <person name="Vaudin M."/>
            <person name="Wiegand R."/>
            <person name="Kaplan H.B."/>
        </authorList>
    </citation>
    <scope>NUCLEOTIDE SEQUENCE [LARGE SCALE GENOMIC DNA]</scope>
    <source>
        <strain>DK1622</strain>
    </source>
</reference>
<feature type="chain" id="PRO_1000082135" description="Succinate--CoA ligase [ADP-forming] subunit beta">
    <location>
        <begin position="1"/>
        <end position="386"/>
    </location>
</feature>
<feature type="domain" description="ATP-grasp" evidence="1">
    <location>
        <begin position="9"/>
        <end position="244"/>
    </location>
</feature>
<feature type="binding site" evidence="1">
    <location>
        <position position="46"/>
    </location>
    <ligand>
        <name>ATP</name>
        <dbReference type="ChEBI" id="CHEBI:30616"/>
    </ligand>
</feature>
<feature type="binding site" evidence="1">
    <location>
        <begin position="53"/>
        <end position="55"/>
    </location>
    <ligand>
        <name>ATP</name>
        <dbReference type="ChEBI" id="CHEBI:30616"/>
    </ligand>
</feature>
<feature type="binding site" evidence="1">
    <location>
        <position position="99"/>
    </location>
    <ligand>
        <name>ATP</name>
        <dbReference type="ChEBI" id="CHEBI:30616"/>
    </ligand>
</feature>
<feature type="binding site" evidence="1">
    <location>
        <position position="102"/>
    </location>
    <ligand>
        <name>ATP</name>
        <dbReference type="ChEBI" id="CHEBI:30616"/>
    </ligand>
</feature>
<feature type="binding site" evidence="1">
    <location>
        <position position="107"/>
    </location>
    <ligand>
        <name>ATP</name>
        <dbReference type="ChEBI" id="CHEBI:30616"/>
    </ligand>
</feature>
<feature type="binding site" evidence="1">
    <location>
        <position position="199"/>
    </location>
    <ligand>
        <name>Mg(2+)</name>
        <dbReference type="ChEBI" id="CHEBI:18420"/>
    </ligand>
</feature>
<feature type="binding site" evidence="1">
    <location>
        <position position="213"/>
    </location>
    <ligand>
        <name>Mg(2+)</name>
        <dbReference type="ChEBI" id="CHEBI:18420"/>
    </ligand>
</feature>
<feature type="binding site" evidence="1">
    <location>
        <position position="264"/>
    </location>
    <ligand>
        <name>substrate</name>
        <note>ligand shared with subunit alpha</note>
    </ligand>
</feature>
<feature type="binding site" evidence="1">
    <location>
        <begin position="321"/>
        <end position="323"/>
    </location>
    <ligand>
        <name>substrate</name>
        <note>ligand shared with subunit alpha</note>
    </ligand>
</feature>
<gene>
    <name evidence="1" type="primary">sucC</name>
    <name type="ordered locus">MXAN_3541</name>
</gene>
<evidence type="ECO:0000255" key="1">
    <source>
        <dbReference type="HAMAP-Rule" id="MF_00558"/>
    </source>
</evidence>
<keyword id="KW-0067">ATP-binding</keyword>
<keyword id="KW-0436">Ligase</keyword>
<keyword id="KW-0460">Magnesium</keyword>
<keyword id="KW-0479">Metal-binding</keyword>
<keyword id="KW-0547">Nucleotide-binding</keyword>
<keyword id="KW-1185">Reference proteome</keyword>
<keyword id="KW-0816">Tricarboxylic acid cycle</keyword>
<accession>Q1D6I9</accession>
<sequence>MKIHEYQGKEIFRKYGVPTPKGILAVSANDAEAAAKELGTSVVVVKAQIHAGGRGKGGGVKLAKSPAEAKELAKQMLGMKLKTIQTGPEGQTVHKVYIEEGLAIGQELYLGVTLDRATSRITFMASREGGVEIEEVAEKHPEKILRESVDPAVGFQDFQGRKLAFGLGLTGPTVNKFTQFCSALYRMFMDTDASLVEINPLVILKDGGVVALDAKVTFDENALYRHKDLLEYRDLAEEEPREIQAKEWDLAYIALDGNIGCMVNGAGLAMATMDTIKLVGGSPANFLDVGGGANKEKVTAAFKLILADPAVKAVLVNIFGGIMKCDVIAEGIIAAAKEVQLKVPLVVRLEGTNVEKGKELLSNSGLAITPADNLRQAAEKAVAAVK</sequence>
<dbReference type="EC" id="6.2.1.5" evidence="1"/>
<dbReference type="EMBL" id="CP000113">
    <property type="protein sequence ID" value="ABF90607.1"/>
    <property type="molecule type" value="Genomic_DNA"/>
</dbReference>
<dbReference type="RefSeq" id="WP_011553570.1">
    <property type="nucleotide sequence ID" value="NC_008095.1"/>
</dbReference>
<dbReference type="SMR" id="Q1D6I9"/>
<dbReference type="STRING" id="246197.MXAN_3541"/>
<dbReference type="EnsemblBacteria" id="ABF90607">
    <property type="protein sequence ID" value="ABF90607"/>
    <property type="gene ID" value="MXAN_3541"/>
</dbReference>
<dbReference type="GeneID" id="41360886"/>
<dbReference type="KEGG" id="mxa:MXAN_3541"/>
<dbReference type="eggNOG" id="COG0045">
    <property type="taxonomic scope" value="Bacteria"/>
</dbReference>
<dbReference type="HOGENOM" id="CLU_037430_0_2_7"/>
<dbReference type="OrthoDB" id="9802602at2"/>
<dbReference type="UniPathway" id="UPA00223">
    <property type="reaction ID" value="UER00999"/>
</dbReference>
<dbReference type="Proteomes" id="UP000002402">
    <property type="component" value="Chromosome"/>
</dbReference>
<dbReference type="GO" id="GO:0005829">
    <property type="term" value="C:cytosol"/>
    <property type="evidence" value="ECO:0007669"/>
    <property type="project" value="TreeGrafter"/>
</dbReference>
<dbReference type="GO" id="GO:0042709">
    <property type="term" value="C:succinate-CoA ligase complex"/>
    <property type="evidence" value="ECO:0007669"/>
    <property type="project" value="TreeGrafter"/>
</dbReference>
<dbReference type="GO" id="GO:0005524">
    <property type="term" value="F:ATP binding"/>
    <property type="evidence" value="ECO:0007669"/>
    <property type="project" value="UniProtKB-UniRule"/>
</dbReference>
<dbReference type="GO" id="GO:0000287">
    <property type="term" value="F:magnesium ion binding"/>
    <property type="evidence" value="ECO:0007669"/>
    <property type="project" value="UniProtKB-UniRule"/>
</dbReference>
<dbReference type="GO" id="GO:0004775">
    <property type="term" value="F:succinate-CoA ligase (ADP-forming) activity"/>
    <property type="evidence" value="ECO:0007669"/>
    <property type="project" value="UniProtKB-UniRule"/>
</dbReference>
<dbReference type="GO" id="GO:0004776">
    <property type="term" value="F:succinate-CoA ligase (GDP-forming) activity"/>
    <property type="evidence" value="ECO:0007669"/>
    <property type="project" value="RHEA"/>
</dbReference>
<dbReference type="GO" id="GO:0006104">
    <property type="term" value="P:succinyl-CoA metabolic process"/>
    <property type="evidence" value="ECO:0007669"/>
    <property type="project" value="TreeGrafter"/>
</dbReference>
<dbReference type="GO" id="GO:0006099">
    <property type="term" value="P:tricarboxylic acid cycle"/>
    <property type="evidence" value="ECO:0007669"/>
    <property type="project" value="UniProtKB-UniRule"/>
</dbReference>
<dbReference type="FunFam" id="3.30.1490.20:FF:000002">
    <property type="entry name" value="Succinate--CoA ligase [ADP-forming] subunit beta"/>
    <property type="match status" value="1"/>
</dbReference>
<dbReference type="FunFam" id="3.30.470.20:FF:000002">
    <property type="entry name" value="Succinate--CoA ligase [ADP-forming] subunit beta"/>
    <property type="match status" value="1"/>
</dbReference>
<dbReference type="FunFam" id="3.40.50.261:FF:000001">
    <property type="entry name" value="Succinate--CoA ligase [ADP-forming] subunit beta"/>
    <property type="match status" value="1"/>
</dbReference>
<dbReference type="Gene3D" id="3.30.1490.20">
    <property type="entry name" value="ATP-grasp fold, A domain"/>
    <property type="match status" value="1"/>
</dbReference>
<dbReference type="Gene3D" id="3.30.470.20">
    <property type="entry name" value="ATP-grasp fold, B domain"/>
    <property type="match status" value="1"/>
</dbReference>
<dbReference type="Gene3D" id="3.40.50.261">
    <property type="entry name" value="Succinyl-CoA synthetase domains"/>
    <property type="match status" value="1"/>
</dbReference>
<dbReference type="HAMAP" id="MF_00558">
    <property type="entry name" value="Succ_CoA_beta"/>
    <property type="match status" value="1"/>
</dbReference>
<dbReference type="InterPro" id="IPR011761">
    <property type="entry name" value="ATP-grasp"/>
</dbReference>
<dbReference type="InterPro" id="IPR013650">
    <property type="entry name" value="ATP-grasp_succ-CoA_synth-type"/>
</dbReference>
<dbReference type="InterPro" id="IPR013815">
    <property type="entry name" value="ATP_grasp_subdomain_1"/>
</dbReference>
<dbReference type="InterPro" id="IPR017866">
    <property type="entry name" value="Succ-CoA_synthase_bsu_CS"/>
</dbReference>
<dbReference type="InterPro" id="IPR005811">
    <property type="entry name" value="SUCC_ACL_C"/>
</dbReference>
<dbReference type="InterPro" id="IPR005809">
    <property type="entry name" value="Succ_CoA_ligase-like_bsu"/>
</dbReference>
<dbReference type="InterPro" id="IPR016102">
    <property type="entry name" value="Succinyl-CoA_synth-like"/>
</dbReference>
<dbReference type="NCBIfam" id="NF001913">
    <property type="entry name" value="PRK00696.1"/>
    <property type="match status" value="1"/>
</dbReference>
<dbReference type="NCBIfam" id="TIGR01016">
    <property type="entry name" value="sucCoAbeta"/>
    <property type="match status" value="1"/>
</dbReference>
<dbReference type="PANTHER" id="PTHR11815:SF10">
    <property type="entry name" value="SUCCINATE--COA LIGASE [GDP-FORMING] SUBUNIT BETA, MITOCHONDRIAL"/>
    <property type="match status" value="1"/>
</dbReference>
<dbReference type="PANTHER" id="PTHR11815">
    <property type="entry name" value="SUCCINYL-COA SYNTHETASE BETA CHAIN"/>
    <property type="match status" value="1"/>
</dbReference>
<dbReference type="Pfam" id="PF08442">
    <property type="entry name" value="ATP-grasp_2"/>
    <property type="match status" value="1"/>
</dbReference>
<dbReference type="Pfam" id="PF00549">
    <property type="entry name" value="Ligase_CoA"/>
    <property type="match status" value="1"/>
</dbReference>
<dbReference type="PIRSF" id="PIRSF001554">
    <property type="entry name" value="SucCS_beta"/>
    <property type="match status" value="1"/>
</dbReference>
<dbReference type="SUPFAM" id="SSF56059">
    <property type="entry name" value="Glutathione synthetase ATP-binding domain-like"/>
    <property type="match status" value="1"/>
</dbReference>
<dbReference type="SUPFAM" id="SSF52210">
    <property type="entry name" value="Succinyl-CoA synthetase domains"/>
    <property type="match status" value="1"/>
</dbReference>
<dbReference type="PROSITE" id="PS50975">
    <property type="entry name" value="ATP_GRASP"/>
    <property type="match status" value="1"/>
</dbReference>
<dbReference type="PROSITE" id="PS01217">
    <property type="entry name" value="SUCCINYL_COA_LIG_3"/>
    <property type="match status" value="1"/>
</dbReference>
<proteinExistence type="inferred from homology"/>